<gene>
    <name type="primary">MT-CYB</name>
    <name type="synonym">COB</name>
    <name type="synonym">CYTB</name>
    <name type="synonym">MTCYB</name>
</gene>
<comment type="function">
    <text evidence="2">Component of the ubiquinol-cytochrome c reductase complex (complex III or cytochrome b-c1 complex) that is part of the mitochondrial respiratory chain. The b-c1 complex mediates electron transfer from ubiquinol to cytochrome c. Contributes to the generation of a proton gradient across the mitochondrial membrane that is then used for ATP synthesis.</text>
</comment>
<comment type="cofactor">
    <cofactor evidence="2">
        <name>heme b</name>
        <dbReference type="ChEBI" id="CHEBI:60344"/>
    </cofactor>
    <text evidence="2">Binds 2 heme b groups non-covalently.</text>
</comment>
<comment type="subunit">
    <text evidence="2">The main subunits of complex b-c1 are: cytochrome b, cytochrome c1 and the Rieske protein.</text>
</comment>
<comment type="subcellular location">
    <subcellularLocation>
        <location evidence="3">Mitochondrion inner membrane</location>
        <topology evidence="3">Multi-pass membrane protein</topology>
    </subcellularLocation>
</comment>
<comment type="miscellaneous">
    <text evidence="1">Heme 1 (or BL or b562) is low-potential and absorbs at about 562 nm, and heme 2 (or BH or b566) is high-potential and absorbs at about 566 nm.</text>
</comment>
<comment type="similarity">
    <text evidence="4 5">Belongs to the cytochrome b family.</text>
</comment>
<comment type="caution">
    <text evidence="2">The full-length protein contains only eight transmembrane helices, not nine as predicted by bioinformatics tools.</text>
</comment>
<dbReference type="EMBL" id="AF527774">
    <property type="protein sequence ID" value="AAM92006.1"/>
    <property type="molecule type" value="Genomic_DNA"/>
</dbReference>
<dbReference type="SMR" id="Q8M0K7"/>
<dbReference type="GO" id="GO:0005743">
    <property type="term" value="C:mitochondrial inner membrane"/>
    <property type="evidence" value="ECO:0007669"/>
    <property type="project" value="UniProtKB-SubCell"/>
</dbReference>
<dbReference type="GO" id="GO:0045275">
    <property type="term" value="C:respiratory chain complex III"/>
    <property type="evidence" value="ECO:0007669"/>
    <property type="project" value="InterPro"/>
</dbReference>
<dbReference type="GO" id="GO:0046872">
    <property type="term" value="F:metal ion binding"/>
    <property type="evidence" value="ECO:0007669"/>
    <property type="project" value="UniProtKB-KW"/>
</dbReference>
<dbReference type="GO" id="GO:0008121">
    <property type="term" value="F:ubiquinol-cytochrome-c reductase activity"/>
    <property type="evidence" value="ECO:0007669"/>
    <property type="project" value="InterPro"/>
</dbReference>
<dbReference type="GO" id="GO:0006122">
    <property type="term" value="P:mitochondrial electron transport, ubiquinol to cytochrome c"/>
    <property type="evidence" value="ECO:0007669"/>
    <property type="project" value="TreeGrafter"/>
</dbReference>
<dbReference type="CDD" id="cd00290">
    <property type="entry name" value="cytochrome_b_C"/>
    <property type="match status" value="1"/>
</dbReference>
<dbReference type="CDD" id="cd00284">
    <property type="entry name" value="Cytochrome_b_N"/>
    <property type="match status" value="1"/>
</dbReference>
<dbReference type="FunFam" id="1.20.810.10:FF:000002">
    <property type="entry name" value="Cytochrome b"/>
    <property type="match status" value="1"/>
</dbReference>
<dbReference type="Gene3D" id="1.20.810.10">
    <property type="entry name" value="Cytochrome Bc1 Complex, Chain C"/>
    <property type="match status" value="1"/>
</dbReference>
<dbReference type="InterPro" id="IPR005798">
    <property type="entry name" value="Cyt_b/b6_C"/>
</dbReference>
<dbReference type="InterPro" id="IPR036150">
    <property type="entry name" value="Cyt_b/b6_C_sf"/>
</dbReference>
<dbReference type="InterPro" id="IPR005797">
    <property type="entry name" value="Cyt_b/b6_N"/>
</dbReference>
<dbReference type="InterPro" id="IPR027387">
    <property type="entry name" value="Cytb/b6-like_sf"/>
</dbReference>
<dbReference type="InterPro" id="IPR030689">
    <property type="entry name" value="Cytochrome_b"/>
</dbReference>
<dbReference type="InterPro" id="IPR048260">
    <property type="entry name" value="Cytochrome_b_C_euk/bac"/>
</dbReference>
<dbReference type="InterPro" id="IPR048259">
    <property type="entry name" value="Cytochrome_b_N_euk/bac"/>
</dbReference>
<dbReference type="InterPro" id="IPR016174">
    <property type="entry name" value="Di-haem_cyt_TM"/>
</dbReference>
<dbReference type="PANTHER" id="PTHR19271">
    <property type="entry name" value="CYTOCHROME B"/>
    <property type="match status" value="1"/>
</dbReference>
<dbReference type="PANTHER" id="PTHR19271:SF16">
    <property type="entry name" value="CYTOCHROME B"/>
    <property type="match status" value="1"/>
</dbReference>
<dbReference type="Pfam" id="PF00032">
    <property type="entry name" value="Cytochrom_B_C"/>
    <property type="match status" value="1"/>
</dbReference>
<dbReference type="Pfam" id="PF00033">
    <property type="entry name" value="Cytochrome_B"/>
    <property type="match status" value="1"/>
</dbReference>
<dbReference type="PIRSF" id="PIRSF038885">
    <property type="entry name" value="COB"/>
    <property type="match status" value="1"/>
</dbReference>
<dbReference type="SUPFAM" id="SSF81648">
    <property type="entry name" value="a domain/subunit of cytochrome bc1 complex (Ubiquinol-cytochrome c reductase)"/>
    <property type="match status" value="1"/>
</dbReference>
<dbReference type="SUPFAM" id="SSF81342">
    <property type="entry name" value="Transmembrane di-heme cytochromes"/>
    <property type="match status" value="1"/>
</dbReference>
<dbReference type="PROSITE" id="PS51003">
    <property type="entry name" value="CYTB_CTER"/>
    <property type="match status" value="1"/>
</dbReference>
<dbReference type="PROSITE" id="PS51002">
    <property type="entry name" value="CYTB_NTER"/>
    <property type="match status" value="1"/>
</dbReference>
<proteinExistence type="inferred from homology"/>
<name>CYB_SAMRI</name>
<protein>
    <recommendedName>
        <fullName>Cytochrome b</fullName>
    </recommendedName>
    <alternativeName>
        <fullName>Complex III subunit 3</fullName>
    </alternativeName>
    <alternativeName>
        <fullName>Complex III subunit III</fullName>
    </alternativeName>
    <alternativeName>
        <fullName>Cytochrome b-c1 complex subunit 3</fullName>
    </alternativeName>
    <alternativeName>
        <fullName>Ubiquinol-cytochrome-c reductase complex cytochrome b subunit</fullName>
    </alternativeName>
</protein>
<evidence type="ECO:0000250" key="1"/>
<evidence type="ECO:0000250" key="2">
    <source>
        <dbReference type="UniProtKB" id="P00157"/>
    </source>
</evidence>
<evidence type="ECO:0000250" key="3">
    <source>
        <dbReference type="UniProtKB" id="P00163"/>
    </source>
</evidence>
<evidence type="ECO:0000255" key="4">
    <source>
        <dbReference type="PROSITE-ProRule" id="PRU00967"/>
    </source>
</evidence>
<evidence type="ECO:0000255" key="5">
    <source>
        <dbReference type="PROSITE-ProRule" id="PRU00968"/>
    </source>
</evidence>
<reference key="1">
    <citation type="submission" date="2002-07" db="EMBL/GenBank/DDBJ databases">
        <title>Cloning and sequence analysis of 3.3kb mtDNA fragment from eri silkworm Samia cynthia ricini.</title>
        <authorList>
            <person name="Shen X."/>
            <person name="Zhao Q."/>
            <person name="Zhang Z."/>
            <person name="Yi Y."/>
            <person name="Li Y."/>
            <person name="He J."/>
        </authorList>
    </citation>
    <scope>NUCLEOTIDE SEQUENCE [GENOMIC DNA]</scope>
    <source>
        <strain>Hualan</strain>
    </source>
</reference>
<organism>
    <name type="scientific">Samia ricini</name>
    <name type="common">Indian eri silkmoth</name>
    <name type="synonym">Samia cynthia ricini</name>
    <dbReference type="NCBI Taxonomy" id="63990"/>
    <lineage>
        <taxon>Eukaryota</taxon>
        <taxon>Metazoa</taxon>
        <taxon>Ecdysozoa</taxon>
        <taxon>Arthropoda</taxon>
        <taxon>Hexapoda</taxon>
        <taxon>Insecta</taxon>
        <taxon>Pterygota</taxon>
        <taxon>Neoptera</taxon>
        <taxon>Endopterygota</taxon>
        <taxon>Lepidoptera</taxon>
        <taxon>Glossata</taxon>
        <taxon>Ditrysia</taxon>
        <taxon>Bombycoidea</taxon>
        <taxon>Saturniidae</taxon>
        <taxon>Saturniinae</taxon>
        <taxon>Attacini</taxon>
        <taxon>Samia</taxon>
    </lineage>
</organism>
<geneLocation type="mitochondrion"/>
<accession>Q8M0K7</accession>
<sequence>MTKFLPIRKTHPILKIINGSLIDLPSPSNISMWWNFGSLLALCLMIQILTGLFLTMYYTANIELAFFSVNYICRNVNYGWLIRTIHANGASFFFICIYLHIGRGIYYESFNLKYTWFIGVIILFMLMATAFMGYVLPWGQMSFWGATVITNLLSAIPYLGTMLVNWIWGGFAVDNATLTRFYTFHFLLPFIILMLTMIHLLFLHQTGSNNPLGLNSNMDKIPFHPYFTYKDLIGFLILMMLLLMLTLSNPYLLGDPDNFIPANPLVTPIHIQPEWYFLFAYAILRSIPNKLGGVIALVMSILILIILPLTFLKKIQGLQFYPINQFMFWIFVMMVILLTWIGARPVEAPYIITGQLLTILYFLYFILNPLISIYWDKLLFNK</sequence>
<feature type="chain" id="PRO_0000061516" description="Cytochrome b">
    <location>
        <begin position="1"/>
        <end position="382"/>
    </location>
</feature>
<feature type="transmembrane region" description="Helical" evidence="2">
    <location>
        <begin position="36"/>
        <end position="56"/>
    </location>
</feature>
<feature type="transmembrane region" description="Helical" evidence="2">
    <location>
        <begin position="80"/>
        <end position="101"/>
    </location>
</feature>
<feature type="transmembrane region" description="Helical" evidence="2">
    <location>
        <begin position="116"/>
        <end position="136"/>
    </location>
</feature>
<feature type="transmembrane region" description="Helical" evidence="2">
    <location>
        <begin position="181"/>
        <end position="201"/>
    </location>
</feature>
<feature type="transmembrane region" description="Helical" evidence="2">
    <location>
        <begin position="229"/>
        <end position="249"/>
    </location>
</feature>
<feature type="transmembrane region" description="Helical" evidence="2">
    <location>
        <begin position="291"/>
        <end position="311"/>
    </location>
</feature>
<feature type="transmembrane region" description="Helical" evidence="2">
    <location>
        <begin position="323"/>
        <end position="343"/>
    </location>
</feature>
<feature type="transmembrane region" description="Helical" evidence="2">
    <location>
        <begin position="350"/>
        <end position="370"/>
    </location>
</feature>
<feature type="binding site" description="axial binding residue" evidence="2">
    <location>
        <position position="86"/>
    </location>
    <ligand>
        <name>heme b</name>
        <dbReference type="ChEBI" id="CHEBI:60344"/>
        <label>b562</label>
    </ligand>
    <ligandPart>
        <name>Fe</name>
        <dbReference type="ChEBI" id="CHEBI:18248"/>
    </ligandPart>
</feature>
<feature type="binding site" description="axial binding residue" evidence="2">
    <location>
        <position position="100"/>
    </location>
    <ligand>
        <name>heme b</name>
        <dbReference type="ChEBI" id="CHEBI:60344"/>
        <label>b566</label>
    </ligand>
    <ligandPart>
        <name>Fe</name>
        <dbReference type="ChEBI" id="CHEBI:18248"/>
    </ligandPart>
</feature>
<feature type="binding site" description="axial binding residue" evidence="2">
    <location>
        <position position="185"/>
    </location>
    <ligand>
        <name>heme b</name>
        <dbReference type="ChEBI" id="CHEBI:60344"/>
        <label>b562</label>
    </ligand>
    <ligandPart>
        <name>Fe</name>
        <dbReference type="ChEBI" id="CHEBI:18248"/>
    </ligandPart>
</feature>
<feature type="binding site" description="axial binding residue" evidence="2">
    <location>
        <position position="199"/>
    </location>
    <ligand>
        <name>heme b</name>
        <dbReference type="ChEBI" id="CHEBI:60344"/>
        <label>b566</label>
    </ligand>
    <ligandPart>
        <name>Fe</name>
        <dbReference type="ChEBI" id="CHEBI:18248"/>
    </ligandPart>
</feature>
<feature type="binding site" evidence="2">
    <location>
        <position position="204"/>
    </location>
    <ligand>
        <name>a ubiquinone</name>
        <dbReference type="ChEBI" id="CHEBI:16389"/>
    </ligand>
</feature>
<keyword id="KW-0249">Electron transport</keyword>
<keyword id="KW-0349">Heme</keyword>
<keyword id="KW-0408">Iron</keyword>
<keyword id="KW-0472">Membrane</keyword>
<keyword id="KW-0479">Metal-binding</keyword>
<keyword id="KW-0496">Mitochondrion</keyword>
<keyword id="KW-0999">Mitochondrion inner membrane</keyword>
<keyword id="KW-0679">Respiratory chain</keyword>
<keyword id="KW-0812">Transmembrane</keyword>
<keyword id="KW-1133">Transmembrane helix</keyword>
<keyword id="KW-0813">Transport</keyword>
<keyword id="KW-0830">Ubiquinone</keyword>